<gene>
    <name evidence="1" type="primary">eno</name>
    <name type="ordered locus">Glov_2019</name>
</gene>
<organism>
    <name type="scientific">Trichlorobacter lovleyi (strain ATCC BAA-1151 / DSM 17278 / SZ)</name>
    <name type="common">Geobacter lovleyi</name>
    <dbReference type="NCBI Taxonomy" id="398767"/>
    <lineage>
        <taxon>Bacteria</taxon>
        <taxon>Pseudomonadati</taxon>
        <taxon>Thermodesulfobacteriota</taxon>
        <taxon>Desulfuromonadia</taxon>
        <taxon>Geobacterales</taxon>
        <taxon>Geobacteraceae</taxon>
        <taxon>Trichlorobacter</taxon>
    </lineage>
</organism>
<evidence type="ECO:0000255" key="1">
    <source>
        <dbReference type="HAMAP-Rule" id="MF_00318"/>
    </source>
</evidence>
<dbReference type="EC" id="4.2.1.11" evidence="1"/>
<dbReference type="EMBL" id="CP001089">
    <property type="protein sequence ID" value="ACD95735.1"/>
    <property type="molecule type" value="Genomic_DNA"/>
</dbReference>
<dbReference type="RefSeq" id="WP_012470074.1">
    <property type="nucleotide sequence ID" value="NC_010814.1"/>
</dbReference>
<dbReference type="SMR" id="B3E2S8"/>
<dbReference type="STRING" id="398767.Glov_2019"/>
<dbReference type="KEGG" id="glo:Glov_2019"/>
<dbReference type="eggNOG" id="COG0148">
    <property type="taxonomic scope" value="Bacteria"/>
</dbReference>
<dbReference type="HOGENOM" id="CLU_031223_2_1_7"/>
<dbReference type="OrthoDB" id="9804716at2"/>
<dbReference type="UniPathway" id="UPA00109">
    <property type="reaction ID" value="UER00187"/>
</dbReference>
<dbReference type="Proteomes" id="UP000002420">
    <property type="component" value="Chromosome"/>
</dbReference>
<dbReference type="GO" id="GO:0009986">
    <property type="term" value="C:cell surface"/>
    <property type="evidence" value="ECO:0007669"/>
    <property type="project" value="UniProtKB-SubCell"/>
</dbReference>
<dbReference type="GO" id="GO:0005576">
    <property type="term" value="C:extracellular region"/>
    <property type="evidence" value="ECO:0007669"/>
    <property type="project" value="UniProtKB-SubCell"/>
</dbReference>
<dbReference type="GO" id="GO:0000015">
    <property type="term" value="C:phosphopyruvate hydratase complex"/>
    <property type="evidence" value="ECO:0007669"/>
    <property type="project" value="InterPro"/>
</dbReference>
<dbReference type="GO" id="GO:0000287">
    <property type="term" value="F:magnesium ion binding"/>
    <property type="evidence" value="ECO:0007669"/>
    <property type="project" value="UniProtKB-UniRule"/>
</dbReference>
<dbReference type="GO" id="GO:0004634">
    <property type="term" value="F:phosphopyruvate hydratase activity"/>
    <property type="evidence" value="ECO:0007669"/>
    <property type="project" value="UniProtKB-UniRule"/>
</dbReference>
<dbReference type="GO" id="GO:0006096">
    <property type="term" value="P:glycolytic process"/>
    <property type="evidence" value="ECO:0007669"/>
    <property type="project" value="UniProtKB-UniRule"/>
</dbReference>
<dbReference type="CDD" id="cd03313">
    <property type="entry name" value="enolase"/>
    <property type="match status" value="1"/>
</dbReference>
<dbReference type="FunFam" id="3.20.20.120:FF:000001">
    <property type="entry name" value="Enolase"/>
    <property type="match status" value="1"/>
</dbReference>
<dbReference type="FunFam" id="3.30.390.10:FF:000001">
    <property type="entry name" value="Enolase"/>
    <property type="match status" value="1"/>
</dbReference>
<dbReference type="Gene3D" id="3.20.20.120">
    <property type="entry name" value="Enolase-like C-terminal domain"/>
    <property type="match status" value="1"/>
</dbReference>
<dbReference type="Gene3D" id="3.30.390.10">
    <property type="entry name" value="Enolase-like, N-terminal domain"/>
    <property type="match status" value="1"/>
</dbReference>
<dbReference type="HAMAP" id="MF_00318">
    <property type="entry name" value="Enolase"/>
    <property type="match status" value="1"/>
</dbReference>
<dbReference type="InterPro" id="IPR000941">
    <property type="entry name" value="Enolase"/>
</dbReference>
<dbReference type="InterPro" id="IPR036849">
    <property type="entry name" value="Enolase-like_C_sf"/>
</dbReference>
<dbReference type="InterPro" id="IPR029017">
    <property type="entry name" value="Enolase-like_N"/>
</dbReference>
<dbReference type="InterPro" id="IPR020810">
    <property type="entry name" value="Enolase_C"/>
</dbReference>
<dbReference type="InterPro" id="IPR020809">
    <property type="entry name" value="Enolase_CS"/>
</dbReference>
<dbReference type="InterPro" id="IPR020811">
    <property type="entry name" value="Enolase_N"/>
</dbReference>
<dbReference type="NCBIfam" id="TIGR01060">
    <property type="entry name" value="eno"/>
    <property type="match status" value="1"/>
</dbReference>
<dbReference type="PANTHER" id="PTHR11902">
    <property type="entry name" value="ENOLASE"/>
    <property type="match status" value="1"/>
</dbReference>
<dbReference type="PANTHER" id="PTHR11902:SF1">
    <property type="entry name" value="ENOLASE"/>
    <property type="match status" value="1"/>
</dbReference>
<dbReference type="Pfam" id="PF00113">
    <property type="entry name" value="Enolase_C"/>
    <property type="match status" value="1"/>
</dbReference>
<dbReference type="Pfam" id="PF03952">
    <property type="entry name" value="Enolase_N"/>
    <property type="match status" value="1"/>
</dbReference>
<dbReference type="PIRSF" id="PIRSF001400">
    <property type="entry name" value="Enolase"/>
    <property type="match status" value="1"/>
</dbReference>
<dbReference type="PRINTS" id="PR00148">
    <property type="entry name" value="ENOLASE"/>
</dbReference>
<dbReference type="SFLD" id="SFLDF00002">
    <property type="entry name" value="enolase"/>
    <property type="match status" value="1"/>
</dbReference>
<dbReference type="SFLD" id="SFLDG00178">
    <property type="entry name" value="enolase"/>
    <property type="match status" value="1"/>
</dbReference>
<dbReference type="SMART" id="SM01192">
    <property type="entry name" value="Enolase_C"/>
    <property type="match status" value="1"/>
</dbReference>
<dbReference type="SMART" id="SM01193">
    <property type="entry name" value="Enolase_N"/>
    <property type="match status" value="1"/>
</dbReference>
<dbReference type="SUPFAM" id="SSF51604">
    <property type="entry name" value="Enolase C-terminal domain-like"/>
    <property type="match status" value="1"/>
</dbReference>
<dbReference type="SUPFAM" id="SSF54826">
    <property type="entry name" value="Enolase N-terminal domain-like"/>
    <property type="match status" value="1"/>
</dbReference>
<dbReference type="PROSITE" id="PS00164">
    <property type="entry name" value="ENOLASE"/>
    <property type="match status" value="1"/>
</dbReference>
<comment type="function">
    <text evidence="1">Catalyzes the reversible conversion of 2-phosphoglycerate (2-PG) into phosphoenolpyruvate (PEP). It is essential for the degradation of carbohydrates via glycolysis.</text>
</comment>
<comment type="catalytic activity">
    <reaction evidence="1">
        <text>(2R)-2-phosphoglycerate = phosphoenolpyruvate + H2O</text>
        <dbReference type="Rhea" id="RHEA:10164"/>
        <dbReference type="ChEBI" id="CHEBI:15377"/>
        <dbReference type="ChEBI" id="CHEBI:58289"/>
        <dbReference type="ChEBI" id="CHEBI:58702"/>
        <dbReference type="EC" id="4.2.1.11"/>
    </reaction>
</comment>
<comment type="cofactor">
    <cofactor evidence="1">
        <name>Mg(2+)</name>
        <dbReference type="ChEBI" id="CHEBI:18420"/>
    </cofactor>
    <text evidence="1">Binds a second Mg(2+) ion via substrate during catalysis.</text>
</comment>
<comment type="pathway">
    <text evidence="1">Carbohydrate degradation; glycolysis; pyruvate from D-glyceraldehyde 3-phosphate: step 4/5.</text>
</comment>
<comment type="subcellular location">
    <subcellularLocation>
        <location evidence="1">Cytoplasm</location>
    </subcellularLocation>
    <subcellularLocation>
        <location evidence="1">Secreted</location>
    </subcellularLocation>
    <subcellularLocation>
        <location evidence="1">Cell surface</location>
    </subcellularLocation>
    <text evidence="1">Fractions of enolase are present in both the cytoplasm and on the cell surface.</text>
</comment>
<comment type="similarity">
    <text evidence="1">Belongs to the enolase family.</text>
</comment>
<keyword id="KW-0963">Cytoplasm</keyword>
<keyword id="KW-0324">Glycolysis</keyword>
<keyword id="KW-0456">Lyase</keyword>
<keyword id="KW-0460">Magnesium</keyword>
<keyword id="KW-0479">Metal-binding</keyword>
<keyword id="KW-1185">Reference proteome</keyword>
<keyword id="KW-0964">Secreted</keyword>
<reference key="1">
    <citation type="submission" date="2008-05" db="EMBL/GenBank/DDBJ databases">
        <title>Complete sequence of chromosome of Geobacter lovleyi SZ.</title>
        <authorList>
            <consortium name="US DOE Joint Genome Institute"/>
            <person name="Lucas S."/>
            <person name="Copeland A."/>
            <person name="Lapidus A."/>
            <person name="Glavina del Rio T."/>
            <person name="Dalin E."/>
            <person name="Tice H."/>
            <person name="Bruce D."/>
            <person name="Goodwin L."/>
            <person name="Pitluck S."/>
            <person name="Chertkov O."/>
            <person name="Meincke L."/>
            <person name="Brettin T."/>
            <person name="Detter J.C."/>
            <person name="Han C."/>
            <person name="Tapia R."/>
            <person name="Kuske C.R."/>
            <person name="Schmutz J."/>
            <person name="Larimer F."/>
            <person name="Land M."/>
            <person name="Hauser L."/>
            <person name="Kyrpides N."/>
            <person name="Mikhailova N."/>
            <person name="Sung Y."/>
            <person name="Fletcher K.E."/>
            <person name="Ritalahti K.M."/>
            <person name="Loeffler F.E."/>
            <person name="Richardson P."/>
        </authorList>
    </citation>
    <scope>NUCLEOTIDE SEQUENCE [LARGE SCALE GENOMIC DNA]</scope>
    <source>
        <strain>ATCC BAA-1151 / DSM 17278 / SZ</strain>
    </source>
</reference>
<name>ENO_TRIL1</name>
<proteinExistence type="inferred from homology"/>
<sequence>MSEIVDIYAREILDSRGNPTLECEVFLESGAFGRAAVPSGASTGEREALELRDGDKGRYLGKGVLQAVDNVNNRIADELIGMEASDQVGIDQRMLEMDGTEFKSNLGANAILGVSLAVAKAAAEEAGLPLYKYIGGANARELPLPMMNIINGGAHADNNVDIQEFMIMPAGACCFAEALRMGAEIFHALKGVLKAKGYNTAVGDEGGFAPNLKSNEEALEVIMEAIVKAGYKPGDDVLLALDVASSELFDKEKGIYTLENEAQKEKTPAQMVDFYENLVNKYPIISIEDGMAENDWDGWKLMTDRLGKKIQIVGDDLFVTNPKILKEGIQKGIANSILIKLNQIGTLTETLEAIEMAKRAGYTTVISHRSGETEDTTLADLAVAVNAGQIKTGSLCRTDRVAKYNQLLRIEDELDTTAEFKGHNVFYNIKK</sequence>
<accession>B3E2S8</accession>
<protein>
    <recommendedName>
        <fullName evidence="1">Enolase</fullName>
        <ecNumber evidence="1">4.2.1.11</ecNumber>
    </recommendedName>
    <alternativeName>
        <fullName evidence="1">2-phospho-D-glycerate hydro-lyase</fullName>
    </alternativeName>
    <alternativeName>
        <fullName evidence="1">2-phosphoglycerate dehydratase</fullName>
    </alternativeName>
</protein>
<feature type="chain" id="PRO_1000115868" description="Enolase">
    <location>
        <begin position="1"/>
        <end position="431"/>
    </location>
</feature>
<feature type="active site" description="Proton donor" evidence="1">
    <location>
        <position position="205"/>
    </location>
</feature>
<feature type="active site" description="Proton acceptor" evidence="1">
    <location>
        <position position="340"/>
    </location>
</feature>
<feature type="binding site" evidence="1">
    <location>
        <position position="163"/>
    </location>
    <ligand>
        <name>(2R)-2-phosphoglycerate</name>
        <dbReference type="ChEBI" id="CHEBI:58289"/>
    </ligand>
</feature>
<feature type="binding site" evidence="1">
    <location>
        <position position="242"/>
    </location>
    <ligand>
        <name>Mg(2+)</name>
        <dbReference type="ChEBI" id="CHEBI:18420"/>
    </ligand>
</feature>
<feature type="binding site" evidence="1">
    <location>
        <position position="288"/>
    </location>
    <ligand>
        <name>Mg(2+)</name>
        <dbReference type="ChEBI" id="CHEBI:18420"/>
    </ligand>
</feature>
<feature type="binding site" evidence="1">
    <location>
        <position position="315"/>
    </location>
    <ligand>
        <name>Mg(2+)</name>
        <dbReference type="ChEBI" id="CHEBI:18420"/>
    </ligand>
</feature>
<feature type="binding site" evidence="1">
    <location>
        <position position="340"/>
    </location>
    <ligand>
        <name>(2R)-2-phosphoglycerate</name>
        <dbReference type="ChEBI" id="CHEBI:58289"/>
    </ligand>
</feature>
<feature type="binding site" evidence="1">
    <location>
        <position position="369"/>
    </location>
    <ligand>
        <name>(2R)-2-phosphoglycerate</name>
        <dbReference type="ChEBI" id="CHEBI:58289"/>
    </ligand>
</feature>
<feature type="binding site" evidence="1">
    <location>
        <position position="370"/>
    </location>
    <ligand>
        <name>(2R)-2-phosphoglycerate</name>
        <dbReference type="ChEBI" id="CHEBI:58289"/>
    </ligand>
</feature>
<feature type="binding site" evidence="1">
    <location>
        <position position="391"/>
    </location>
    <ligand>
        <name>(2R)-2-phosphoglycerate</name>
        <dbReference type="ChEBI" id="CHEBI:58289"/>
    </ligand>
</feature>